<accession>Q96RB7</accession>
<accession>B2RNL5</accession>
<accession>B2RNL7</accession>
<dbReference type="EMBL" id="CH471076">
    <property type="protein sequence ID" value="EAW73717.1"/>
    <property type="molecule type" value="Genomic_DNA"/>
</dbReference>
<dbReference type="EMBL" id="BC136951">
    <property type="protein sequence ID" value="AAI36952.1"/>
    <property type="molecule type" value="mRNA"/>
</dbReference>
<dbReference type="EMBL" id="BC136953">
    <property type="protein sequence ID" value="AAI36954.1"/>
    <property type="molecule type" value="mRNA"/>
</dbReference>
<dbReference type="EMBL" id="AF399521">
    <property type="protein sequence ID" value="AAK95006.1"/>
    <property type="molecule type" value="Genomic_DNA"/>
</dbReference>
<dbReference type="CCDS" id="CCDS53629.1"/>
<dbReference type="RefSeq" id="NP_001005245.1">
    <property type="nucleotide sequence ID" value="NM_001005245.1"/>
</dbReference>
<dbReference type="SMR" id="Q96RB7"/>
<dbReference type="BioGRID" id="128547">
    <property type="interactions" value="3"/>
</dbReference>
<dbReference type="FunCoup" id="Q96RB7">
    <property type="interactions" value="416"/>
</dbReference>
<dbReference type="IntAct" id="Q96RB7">
    <property type="interactions" value="2"/>
</dbReference>
<dbReference type="STRING" id="9606.ENSP00000432417"/>
<dbReference type="GlyCosmos" id="Q96RB7">
    <property type="glycosylation" value="1 site, No reported glycans"/>
</dbReference>
<dbReference type="GlyGen" id="Q96RB7">
    <property type="glycosylation" value="1 site"/>
</dbReference>
<dbReference type="iPTMnet" id="Q96RB7"/>
<dbReference type="PhosphoSitePlus" id="Q96RB7"/>
<dbReference type="BioMuta" id="OR5M11"/>
<dbReference type="DMDM" id="38372852"/>
<dbReference type="MassIVE" id="Q96RB7"/>
<dbReference type="PaxDb" id="9606-ENSP00000432417"/>
<dbReference type="Antibodypedia" id="58992">
    <property type="antibodies" value="43 antibodies from 14 providers"/>
</dbReference>
<dbReference type="DNASU" id="219487"/>
<dbReference type="Ensembl" id="ENST00000528616.5">
    <property type="protein sequence ID" value="ENSP00000432417.2"/>
    <property type="gene ID" value="ENSG00000255223.5"/>
</dbReference>
<dbReference type="GeneID" id="219487"/>
<dbReference type="KEGG" id="hsa:219487"/>
<dbReference type="MANE-Select" id="ENST00000528616.5">
    <property type="protein sequence ID" value="ENSP00000432417.2"/>
    <property type="RefSeq nucleotide sequence ID" value="NM_001005245.1"/>
    <property type="RefSeq protein sequence ID" value="NP_001005245.1"/>
</dbReference>
<dbReference type="UCSC" id="uc010rjl.2">
    <property type="organism name" value="human"/>
</dbReference>
<dbReference type="AGR" id="HGNC:15291"/>
<dbReference type="CTD" id="219487"/>
<dbReference type="GeneCards" id="OR5M11"/>
<dbReference type="HGNC" id="HGNC:15291">
    <property type="gene designation" value="OR5M11"/>
</dbReference>
<dbReference type="HPA" id="ENSG00000255223">
    <property type="expression patterns" value="Not detected"/>
</dbReference>
<dbReference type="neXtProt" id="NX_Q96RB7"/>
<dbReference type="OpenTargets" id="ENSG00000255223"/>
<dbReference type="PharmGKB" id="PA32548"/>
<dbReference type="VEuPathDB" id="HostDB:ENSG00000255223"/>
<dbReference type="eggNOG" id="ENOG502T9JC">
    <property type="taxonomic scope" value="Eukaryota"/>
</dbReference>
<dbReference type="GeneTree" id="ENSGT01120000271889"/>
<dbReference type="HOGENOM" id="CLU_012526_1_0_1"/>
<dbReference type="InParanoid" id="Q96RB7"/>
<dbReference type="OMA" id="GMIMLMR"/>
<dbReference type="OrthoDB" id="9518048at2759"/>
<dbReference type="PAN-GO" id="Q96RB7">
    <property type="GO annotations" value="4 GO annotations based on evolutionary models"/>
</dbReference>
<dbReference type="PhylomeDB" id="Q96RB7"/>
<dbReference type="TreeFam" id="TF352751"/>
<dbReference type="PathwayCommons" id="Q96RB7"/>
<dbReference type="Reactome" id="R-HSA-9752946">
    <property type="pathway name" value="Expression and translocation of olfactory receptors"/>
</dbReference>
<dbReference type="BioGRID-ORCS" id="219487">
    <property type="hits" value="9 hits in 744 CRISPR screens"/>
</dbReference>
<dbReference type="GeneWiki" id="OR5M11"/>
<dbReference type="GenomeRNAi" id="219487"/>
<dbReference type="Pharos" id="Q96RB7">
    <property type="development level" value="Tdark"/>
</dbReference>
<dbReference type="PRO" id="PR:Q96RB7"/>
<dbReference type="Proteomes" id="UP000005640">
    <property type="component" value="Chromosome 11"/>
</dbReference>
<dbReference type="RNAct" id="Q96RB7">
    <property type="molecule type" value="protein"/>
</dbReference>
<dbReference type="Bgee" id="ENSG00000255223">
    <property type="expression patterns" value="Expressed in urinary bladder and 1 other cell type or tissue"/>
</dbReference>
<dbReference type="ExpressionAtlas" id="Q96RB7">
    <property type="expression patterns" value="baseline and differential"/>
</dbReference>
<dbReference type="GO" id="GO:0005886">
    <property type="term" value="C:plasma membrane"/>
    <property type="evidence" value="ECO:0007669"/>
    <property type="project" value="UniProtKB-SubCell"/>
</dbReference>
<dbReference type="GO" id="GO:0004930">
    <property type="term" value="F:G protein-coupled receptor activity"/>
    <property type="evidence" value="ECO:0007669"/>
    <property type="project" value="UniProtKB-KW"/>
</dbReference>
<dbReference type="GO" id="GO:0004984">
    <property type="term" value="F:olfactory receptor activity"/>
    <property type="evidence" value="ECO:0007669"/>
    <property type="project" value="InterPro"/>
</dbReference>
<dbReference type="CDD" id="cd15412">
    <property type="entry name" value="7tmA_OR5M-like"/>
    <property type="match status" value="1"/>
</dbReference>
<dbReference type="FunFam" id="1.10.1220.70:FF:000001">
    <property type="entry name" value="Olfactory receptor"/>
    <property type="match status" value="1"/>
</dbReference>
<dbReference type="FunFam" id="1.20.1070.10:FF:000003">
    <property type="entry name" value="Olfactory receptor"/>
    <property type="match status" value="1"/>
</dbReference>
<dbReference type="Gene3D" id="1.20.1070.10">
    <property type="entry name" value="Rhodopsin 7-helix transmembrane proteins"/>
    <property type="match status" value="1"/>
</dbReference>
<dbReference type="InterPro" id="IPR000276">
    <property type="entry name" value="GPCR_Rhodpsn"/>
</dbReference>
<dbReference type="InterPro" id="IPR017452">
    <property type="entry name" value="GPCR_Rhodpsn_7TM"/>
</dbReference>
<dbReference type="InterPro" id="IPR000725">
    <property type="entry name" value="Olfact_rcpt"/>
</dbReference>
<dbReference type="PANTHER" id="PTHR48018">
    <property type="entry name" value="OLFACTORY RECEPTOR"/>
    <property type="match status" value="1"/>
</dbReference>
<dbReference type="Pfam" id="PF13853">
    <property type="entry name" value="7tm_4"/>
    <property type="match status" value="1"/>
</dbReference>
<dbReference type="PRINTS" id="PR00237">
    <property type="entry name" value="GPCRRHODOPSN"/>
</dbReference>
<dbReference type="PRINTS" id="PR00245">
    <property type="entry name" value="OLFACTORYR"/>
</dbReference>
<dbReference type="SUPFAM" id="SSF81321">
    <property type="entry name" value="Family A G protein-coupled receptor-like"/>
    <property type="match status" value="1"/>
</dbReference>
<dbReference type="PROSITE" id="PS00237">
    <property type="entry name" value="G_PROTEIN_RECEP_F1_1"/>
    <property type="match status" value="1"/>
</dbReference>
<dbReference type="PROSITE" id="PS50262">
    <property type="entry name" value="G_PROTEIN_RECEP_F1_2"/>
    <property type="match status" value="1"/>
</dbReference>
<protein>
    <recommendedName>
        <fullName>Olfactory receptor 5M11</fullName>
    </recommendedName>
</protein>
<proteinExistence type="evidence at transcript level"/>
<feature type="chain" id="PRO_0000150609" description="Olfactory receptor 5M11">
    <location>
        <begin position="1"/>
        <end position="305"/>
    </location>
</feature>
<feature type="topological domain" description="Extracellular" evidence="1">
    <location>
        <begin position="1"/>
        <end position="25"/>
    </location>
</feature>
<feature type="transmembrane region" description="Helical; Name=1" evidence="1">
    <location>
        <begin position="26"/>
        <end position="46"/>
    </location>
</feature>
<feature type="topological domain" description="Cytoplasmic" evidence="1">
    <location>
        <begin position="47"/>
        <end position="54"/>
    </location>
</feature>
<feature type="transmembrane region" description="Helical; Name=2" evidence="1">
    <location>
        <begin position="55"/>
        <end position="75"/>
    </location>
</feature>
<feature type="topological domain" description="Extracellular" evidence="1">
    <location>
        <begin position="76"/>
        <end position="98"/>
    </location>
</feature>
<feature type="transmembrane region" description="Helical; Name=3" evidence="1">
    <location>
        <begin position="99"/>
        <end position="119"/>
    </location>
</feature>
<feature type="topological domain" description="Cytoplasmic" evidence="1">
    <location>
        <begin position="120"/>
        <end position="138"/>
    </location>
</feature>
<feature type="transmembrane region" description="Helical; Name=4" evidence="1">
    <location>
        <begin position="139"/>
        <end position="159"/>
    </location>
</feature>
<feature type="topological domain" description="Extracellular" evidence="1">
    <location>
        <begin position="160"/>
        <end position="195"/>
    </location>
</feature>
<feature type="transmembrane region" description="Helical; Name=5" evidence="1">
    <location>
        <begin position="196"/>
        <end position="216"/>
    </location>
</feature>
<feature type="topological domain" description="Cytoplasmic" evidence="1">
    <location>
        <begin position="217"/>
        <end position="236"/>
    </location>
</feature>
<feature type="transmembrane region" description="Helical; Name=6" evidence="1">
    <location>
        <begin position="237"/>
        <end position="257"/>
    </location>
</feature>
<feature type="topological domain" description="Extracellular" evidence="1">
    <location>
        <begin position="258"/>
        <end position="270"/>
    </location>
</feature>
<feature type="transmembrane region" description="Helical; Name=7" evidence="1">
    <location>
        <begin position="271"/>
        <end position="291"/>
    </location>
</feature>
<feature type="topological domain" description="Cytoplasmic" evidence="1">
    <location>
        <begin position="292"/>
        <end position="305"/>
    </location>
</feature>
<feature type="glycosylation site" description="N-linked (GlcNAc...) asparagine" evidence="1">
    <location>
        <position position="5"/>
    </location>
</feature>
<feature type="disulfide bond" evidence="2">
    <location>
        <begin position="96"/>
        <end position="188"/>
    </location>
</feature>
<feature type="sequence variant" id="VAR_034231" description="In dbSNP:rs628524." evidence="3 4">
    <original>S</original>
    <variation>N</variation>
    <location>
        <position position="171"/>
    </location>
</feature>
<feature type="sequence variant" id="VAR_034232" description="In dbSNP:rs17547207.">
    <original>V</original>
    <variation>L</variation>
    <location>
        <position position="280"/>
    </location>
</feature>
<keyword id="KW-1003">Cell membrane</keyword>
<keyword id="KW-1015">Disulfide bond</keyword>
<keyword id="KW-0297">G-protein coupled receptor</keyword>
<keyword id="KW-0325">Glycoprotein</keyword>
<keyword id="KW-0472">Membrane</keyword>
<keyword id="KW-0552">Olfaction</keyword>
<keyword id="KW-0675">Receptor</keyword>
<keyword id="KW-1185">Reference proteome</keyword>
<keyword id="KW-0716">Sensory transduction</keyword>
<keyword id="KW-0807">Transducer</keyword>
<keyword id="KW-0812">Transmembrane</keyword>
<keyword id="KW-1133">Transmembrane helix</keyword>
<sequence length="305" mass="34450">MSNTNGSAITEFILLGLTDCPELQSLLFVLFLVVYLVTLLGNLGMIMLMRLDSRLHTPMYFFLTNLAFVDLCYTSNATPQMSTNIVSEKTISFAGCFTQCYIFIALLLTEFYMLAAMAYDRYVAIYDPLRYSVKTSRRVCICLATFPYVYGFSDGLFQAILTFRLTFCRSSVINHFYCADPPLIKLSCSDTYVKEHAMFISAGFNLSSSLTIVLVSYAFILAAILRIKSAEGRHKAFSTCGSHMMAVTLFYGTLFCMYIRPPTDKTVEESKIIAVFYTFVSPVLNPLIYSLRNKDVKQALKNVLR</sequence>
<comment type="function">
    <text evidence="5">Odorant receptor.</text>
</comment>
<comment type="subcellular location">
    <subcellularLocation>
        <location>Cell membrane</location>
        <topology>Multi-pass membrane protein</topology>
    </subcellularLocation>
</comment>
<comment type="similarity">
    <text evidence="2">Belongs to the G-protein coupled receptor 1 family.</text>
</comment>
<comment type="online information" name="Human Olfactory Receptor Data Exploratorium (HORDE)">
    <link uri="http://genome.weizmann.ac.il/horde/card/index/symbol:OR5M11"/>
</comment>
<evidence type="ECO:0000255" key="1"/>
<evidence type="ECO:0000255" key="2">
    <source>
        <dbReference type="PROSITE-ProRule" id="PRU00521"/>
    </source>
</evidence>
<evidence type="ECO:0000269" key="3">
    <source>
    </source>
</evidence>
<evidence type="ECO:0000269" key="4">
    <source ref="1"/>
</evidence>
<evidence type="ECO:0000305" key="5"/>
<organism>
    <name type="scientific">Homo sapiens</name>
    <name type="common">Human</name>
    <dbReference type="NCBI Taxonomy" id="9606"/>
    <lineage>
        <taxon>Eukaryota</taxon>
        <taxon>Metazoa</taxon>
        <taxon>Chordata</taxon>
        <taxon>Craniata</taxon>
        <taxon>Vertebrata</taxon>
        <taxon>Euteleostomi</taxon>
        <taxon>Mammalia</taxon>
        <taxon>Eutheria</taxon>
        <taxon>Euarchontoglires</taxon>
        <taxon>Primates</taxon>
        <taxon>Haplorrhini</taxon>
        <taxon>Catarrhini</taxon>
        <taxon>Hominidae</taxon>
        <taxon>Homo</taxon>
    </lineage>
</organism>
<gene>
    <name type="primary">OR5M11</name>
</gene>
<reference key="1">
    <citation type="submission" date="2005-07" db="EMBL/GenBank/DDBJ databases">
        <authorList>
            <person name="Mural R.J."/>
            <person name="Istrail S."/>
            <person name="Sutton G.G."/>
            <person name="Florea L."/>
            <person name="Halpern A.L."/>
            <person name="Mobarry C.M."/>
            <person name="Lippert R."/>
            <person name="Walenz B."/>
            <person name="Shatkay H."/>
            <person name="Dew I."/>
            <person name="Miller J.R."/>
            <person name="Flanigan M.J."/>
            <person name="Edwards N.J."/>
            <person name="Bolanos R."/>
            <person name="Fasulo D."/>
            <person name="Halldorsson B.V."/>
            <person name="Hannenhalli S."/>
            <person name="Turner R."/>
            <person name="Yooseph S."/>
            <person name="Lu F."/>
            <person name="Nusskern D.R."/>
            <person name="Shue B.C."/>
            <person name="Zheng X.H."/>
            <person name="Zhong F."/>
            <person name="Delcher A.L."/>
            <person name="Huson D.H."/>
            <person name="Kravitz S.A."/>
            <person name="Mouchard L."/>
            <person name="Reinert K."/>
            <person name="Remington K.A."/>
            <person name="Clark A.G."/>
            <person name="Waterman M.S."/>
            <person name="Eichler E.E."/>
            <person name="Adams M.D."/>
            <person name="Hunkapiller M.W."/>
            <person name="Myers E.W."/>
            <person name="Venter J.C."/>
        </authorList>
    </citation>
    <scope>NUCLEOTIDE SEQUENCE [LARGE SCALE GENOMIC DNA]</scope>
    <scope>VARIANT ASN-171</scope>
</reference>
<reference key="2">
    <citation type="journal article" date="2004" name="Genome Res.">
        <title>The status, quality, and expansion of the NIH full-length cDNA project: the Mammalian Gene Collection (MGC).</title>
        <authorList>
            <consortium name="The MGC Project Team"/>
        </authorList>
    </citation>
    <scope>NUCLEOTIDE SEQUENCE [LARGE SCALE MRNA]</scope>
    <scope>VARIANT ASN-171</scope>
</reference>
<reference key="3">
    <citation type="journal article" date="2002" name="Genomics">
        <title>DEFOG: a practical scheme for deciphering families of genes.</title>
        <authorList>
            <person name="Fuchs T."/>
            <person name="Malecova B."/>
            <person name="Linhart C."/>
            <person name="Sharan R."/>
            <person name="Khen M."/>
            <person name="Herwig R."/>
            <person name="Shmulevich D."/>
            <person name="Elkon R."/>
            <person name="Steinfath M."/>
            <person name="O'Brien J.K."/>
            <person name="Radelof U."/>
            <person name="Lehrach H."/>
            <person name="Lancet D."/>
            <person name="Shamir R."/>
        </authorList>
    </citation>
    <scope>NUCLEOTIDE SEQUENCE [GENOMIC DNA] OF 68-283</scope>
</reference>
<name>OR5MB_HUMAN</name>